<name>RS9_PSEF5</name>
<keyword id="KW-0687">Ribonucleoprotein</keyword>
<keyword id="KW-0689">Ribosomal protein</keyword>
<reference key="1">
    <citation type="journal article" date="2005" name="Nat. Biotechnol.">
        <title>Complete genome sequence of the plant commensal Pseudomonas fluorescens Pf-5.</title>
        <authorList>
            <person name="Paulsen I.T."/>
            <person name="Press C.M."/>
            <person name="Ravel J."/>
            <person name="Kobayashi D.Y."/>
            <person name="Myers G.S.A."/>
            <person name="Mavrodi D.V."/>
            <person name="DeBoy R.T."/>
            <person name="Seshadri R."/>
            <person name="Ren Q."/>
            <person name="Madupu R."/>
            <person name="Dodson R.J."/>
            <person name="Durkin A.S."/>
            <person name="Brinkac L.M."/>
            <person name="Daugherty S.C."/>
            <person name="Sullivan S.A."/>
            <person name="Rosovitz M.J."/>
            <person name="Gwinn M.L."/>
            <person name="Zhou L."/>
            <person name="Schneider D.J."/>
            <person name="Cartinhour S.W."/>
            <person name="Nelson W.C."/>
            <person name="Weidman J."/>
            <person name="Watkins K."/>
            <person name="Tran K."/>
            <person name="Khouri H."/>
            <person name="Pierson E.A."/>
            <person name="Pierson L.S. III"/>
            <person name="Thomashow L.S."/>
            <person name="Loper J.E."/>
        </authorList>
    </citation>
    <scope>NUCLEOTIDE SEQUENCE [LARGE SCALE GENOMIC DNA]</scope>
    <source>
        <strain>ATCC BAA-477 / NRRL B-23932 / Pf-5</strain>
    </source>
</reference>
<evidence type="ECO:0000255" key="1">
    <source>
        <dbReference type="HAMAP-Rule" id="MF_00532"/>
    </source>
</evidence>
<evidence type="ECO:0000305" key="2"/>
<comment type="similarity">
    <text evidence="1">Belongs to the universal ribosomal protein uS9 family.</text>
</comment>
<organism>
    <name type="scientific">Pseudomonas fluorescens (strain ATCC BAA-477 / NRRL B-23932 / Pf-5)</name>
    <dbReference type="NCBI Taxonomy" id="220664"/>
    <lineage>
        <taxon>Bacteria</taxon>
        <taxon>Pseudomonadati</taxon>
        <taxon>Pseudomonadota</taxon>
        <taxon>Gammaproteobacteria</taxon>
        <taxon>Pseudomonadales</taxon>
        <taxon>Pseudomonadaceae</taxon>
        <taxon>Pseudomonas</taxon>
    </lineage>
</organism>
<proteinExistence type="inferred from homology"/>
<dbReference type="EMBL" id="CP000076">
    <property type="protein sequence ID" value="AAY94309.1"/>
    <property type="molecule type" value="Genomic_DNA"/>
</dbReference>
<dbReference type="RefSeq" id="WP_003228056.1">
    <property type="nucleotide sequence ID" value="NC_004129.6"/>
</dbReference>
<dbReference type="SMR" id="Q4K6H3"/>
<dbReference type="STRING" id="220664.PFL_5081"/>
<dbReference type="GeneID" id="93405690"/>
<dbReference type="KEGG" id="pfl:PFL_5081"/>
<dbReference type="eggNOG" id="COG0103">
    <property type="taxonomic scope" value="Bacteria"/>
</dbReference>
<dbReference type="HOGENOM" id="CLU_046483_2_1_6"/>
<dbReference type="Proteomes" id="UP000008540">
    <property type="component" value="Chromosome"/>
</dbReference>
<dbReference type="GO" id="GO:0022627">
    <property type="term" value="C:cytosolic small ribosomal subunit"/>
    <property type="evidence" value="ECO:0007669"/>
    <property type="project" value="TreeGrafter"/>
</dbReference>
<dbReference type="GO" id="GO:0003723">
    <property type="term" value="F:RNA binding"/>
    <property type="evidence" value="ECO:0007669"/>
    <property type="project" value="TreeGrafter"/>
</dbReference>
<dbReference type="GO" id="GO:0003735">
    <property type="term" value="F:structural constituent of ribosome"/>
    <property type="evidence" value="ECO:0007669"/>
    <property type="project" value="InterPro"/>
</dbReference>
<dbReference type="GO" id="GO:0006412">
    <property type="term" value="P:translation"/>
    <property type="evidence" value="ECO:0007669"/>
    <property type="project" value="UniProtKB-UniRule"/>
</dbReference>
<dbReference type="FunFam" id="3.30.230.10:FF:000001">
    <property type="entry name" value="30S ribosomal protein S9"/>
    <property type="match status" value="1"/>
</dbReference>
<dbReference type="Gene3D" id="3.30.230.10">
    <property type="match status" value="1"/>
</dbReference>
<dbReference type="HAMAP" id="MF_00532_B">
    <property type="entry name" value="Ribosomal_uS9_B"/>
    <property type="match status" value="1"/>
</dbReference>
<dbReference type="InterPro" id="IPR020568">
    <property type="entry name" value="Ribosomal_Su5_D2-typ_SF"/>
</dbReference>
<dbReference type="InterPro" id="IPR000754">
    <property type="entry name" value="Ribosomal_uS9"/>
</dbReference>
<dbReference type="InterPro" id="IPR023035">
    <property type="entry name" value="Ribosomal_uS9_bac/plastid"/>
</dbReference>
<dbReference type="InterPro" id="IPR020574">
    <property type="entry name" value="Ribosomal_uS9_CS"/>
</dbReference>
<dbReference type="InterPro" id="IPR014721">
    <property type="entry name" value="Ribsml_uS5_D2-typ_fold_subgr"/>
</dbReference>
<dbReference type="NCBIfam" id="NF001099">
    <property type="entry name" value="PRK00132.1"/>
    <property type="match status" value="1"/>
</dbReference>
<dbReference type="PANTHER" id="PTHR21569">
    <property type="entry name" value="RIBOSOMAL PROTEIN S9"/>
    <property type="match status" value="1"/>
</dbReference>
<dbReference type="PANTHER" id="PTHR21569:SF1">
    <property type="entry name" value="SMALL RIBOSOMAL SUBUNIT PROTEIN US9M"/>
    <property type="match status" value="1"/>
</dbReference>
<dbReference type="Pfam" id="PF00380">
    <property type="entry name" value="Ribosomal_S9"/>
    <property type="match status" value="1"/>
</dbReference>
<dbReference type="SUPFAM" id="SSF54211">
    <property type="entry name" value="Ribosomal protein S5 domain 2-like"/>
    <property type="match status" value="1"/>
</dbReference>
<dbReference type="PROSITE" id="PS00360">
    <property type="entry name" value="RIBOSOMAL_S9"/>
    <property type="match status" value="1"/>
</dbReference>
<sequence length="130" mass="14619">MSATQNYGTGRRKTATARVFLRPGTGNISINNRSLDNFFGRETARMVVRQPLELTETVEKFDIYVTVIGGGVSGQAGAIRHGITRALMDYDETLRSALRKAGFVTRDAREVERKKVGLRKARKRPQYSKR</sequence>
<protein>
    <recommendedName>
        <fullName evidence="1">Small ribosomal subunit protein uS9</fullName>
    </recommendedName>
    <alternativeName>
        <fullName evidence="2">30S ribosomal protein S9</fullName>
    </alternativeName>
</protein>
<accession>Q4K6H3</accession>
<feature type="chain" id="PRO_1000051294" description="Small ribosomal subunit protein uS9">
    <location>
        <begin position="1"/>
        <end position="130"/>
    </location>
</feature>
<gene>
    <name evidence="1" type="primary">rpsI</name>
    <name type="ordered locus">PFL_5081</name>
</gene>